<proteinExistence type="evidence at protein level"/>
<dbReference type="EMBL" id="X55354">
    <property type="protein sequence ID" value="CAA39039.1"/>
    <property type="molecule type" value="mRNA"/>
</dbReference>
<dbReference type="PIR" id="S17446">
    <property type="entry name" value="S17446"/>
</dbReference>
<dbReference type="RefSeq" id="NP_001312779.1">
    <property type="nucleotide sequence ID" value="NM_001325850.1"/>
</dbReference>
<dbReference type="RefSeq" id="XP_016490258.1">
    <property type="nucleotide sequence ID" value="XM_016634772.1"/>
</dbReference>
<dbReference type="RefSeq" id="XP_016490259.1">
    <property type="nucleotide sequence ID" value="XM_016634773.1"/>
</dbReference>
<dbReference type="RefSeq" id="XP_016490260.1">
    <property type="nucleotide sequence ID" value="XM_016634774.1"/>
</dbReference>
<dbReference type="RefSeq" id="XP_016490262.1">
    <property type="nucleotide sequence ID" value="XM_016634776.1"/>
</dbReference>
<dbReference type="PDB" id="1V2B">
    <property type="method" value="X-ray"/>
    <property type="resolution" value="1.60 A"/>
    <property type="chains" value="A/B=89-265"/>
</dbReference>
<dbReference type="PDBsum" id="1V2B"/>
<dbReference type="SMR" id="P18212"/>
<dbReference type="STRING" id="4097.P18212"/>
<dbReference type="PaxDb" id="4097-P18212"/>
<dbReference type="GeneID" id="107810044"/>
<dbReference type="KEGG" id="nta:107810044"/>
<dbReference type="OMA" id="WIVTIEG"/>
<dbReference type="OrthoDB" id="507333at2759"/>
<dbReference type="PhylomeDB" id="P18212"/>
<dbReference type="EvolutionaryTrace" id="P18212"/>
<dbReference type="Proteomes" id="UP000084051">
    <property type="component" value="Unplaced"/>
</dbReference>
<dbReference type="GO" id="GO:0009535">
    <property type="term" value="C:chloroplast thylakoid membrane"/>
    <property type="evidence" value="ECO:0007669"/>
    <property type="project" value="UniProtKB-SubCell"/>
</dbReference>
<dbReference type="GO" id="GO:0019898">
    <property type="term" value="C:extrinsic component of membrane"/>
    <property type="evidence" value="ECO:0007669"/>
    <property type="project" value="InterPro"/>
</dbReference>
<dbReference type="GO" id="GO:0009654">
    <property type="term" value="C:photosystem II oxygen evolving complex"/>
    <property type="evidence" value="ECO:0007669"/>
    <property type="project" value="InterPro"/>
</dbReference>
<dbReference type="GO" id="GO:0005509">
    <property type="term" value="F:calcium ion binding"/>
    <property type="evidence" value="ECO:0007669"/>
    <property type="project" value="InterPro"/>
</dbReference>
<dbReference type="GO" id="GO:0015979">
    <property type="term" value="P:photosynthesis"/>
    <property type="evidence" value="ECO:0007669"/>
    <property type="project" value="UniProtKB-KW"/>
</dbReference>
<dbReference type="DisProt" id="DP01591"/>
<dbReference type="Gene3D" id="3.40.1000.10">
    <property type="entry name" value="Mog1/PsbP, alpha/beta/alpha sandwich"/>
    <property type="match status" value="1"/>
</dbReference>
<dbReference type="InterPro" id="IPR016123">
    <property type="entry name" value="Mog1/PsbP_a/b/a-sand"/>
</dbReference>
<dbReference type="InterPro" id="IPR002683">
    <property type="entry name" value="PsbP_C"/>
</dbReference>
<dbReference type="PANTHER" id="PTHR31407">
    <property type="match status" value="1"/>
</dbReference>
<dbReference type="PANTHER" id="PTHR31407:SF6">
    <property type="entry name" value="OXYGEN-EVOLVING ENHANCER PROTEIN 2-1, CHLOROPLASTIC"/>
    <property type="match status" value="1"/>
</dbReference>
<dbReference type="Pfam" id="PF01789">
    <property type="entry name" value="PsbP"/>
    <property type="match status" value="1"/>
</dbReference>
<dbReference type="SUPFAM" id="SSF55724">
    <property type="entry name" value="Mog1p/PsbP-like"/>
    <property type="match status" value="1"/>
</dbReference>
<accession>P18212</accession>
<protein>
    <recommendedName>
        <fullName>Oxygen-evolving enhancer protein 2-2, chloroplastic</fullName>
        <shortName>OEE2</shortName>
    </recommendedName>
    <alternativeName>
        <fullName>23 kDa subunit of oxygen evolving system of photosystem II</fullName>
    </alternativeName>
    <alternativeName>
        <fullName>23 kDa thylakoid membrane protein</fullName>
    </alternativeName>
    <alternativeName>
        <fullName>OEC 23 kDa subunit</fullName>
    </alternativeName>
</protein>
<sequence>MASTQCFLHHHALSTPARTPLVRSIVPSLKPNQLLVCRAQKQSAPQEDNVNSVSVSRRLALTVLIGAAAVGSKVSPADAAYGEAANVFGKPKTDTDFQTYNGDGFKLQIPSKWNPNKEVEYPGQVLRFEDNFDATSNVIVAITPTDKKSITDFGSPEQFLSQVDYLLGRQAYSGKTDSEGGFESDAVAIANVLETSSAEVGGKPYYYLSVLTRTADGNEGGKHQLITATVNDGKLYICKAQAGDKRWFKGAKKFVENTATSFSLA</sequence>
<name>PSBP2_TOBAC</name>
<gene>
    <name type="primary">PSBP2</name>
    <name type="synonym">OEE2-B</name>
    <name type="synonym">PSBP</name>
</gene>
<organism>
    <name type="scientific">Nicotiana tabacum</name>
    <name type="common">Common tobacco</name>
    <dbReference type="NCBI Taxonomy" id="4097"/>
    <lineage>
        <taxon>Eukaryota</taxon>
        <taxon>Viridiplantae</taxon>
        <taxon>Streptophyta</taxon>
        <taxon>Embryophyta</taxon>
        <taxon>Tracheophyta</taxon>
        <taxon>Spermatophyta</taxon>
        <taxon>Magnoliopsida</taxon>
        <taxon>eudicotyledons</taxon>
        <taxon>Gunneridae</taxon>
        <taxon>Pentapetalae</taxon>
        <taxon>asterids</taxon>
        <taxon>lamiids</taxon>
        <taxon>Solanales</taxon>
        <taxon>Solanaceae</taxon>
        <taxon>Nicotianoideae</taxon>
        <taxon>Nicotianeae</taxon>
        <taxon>Nicotiana</taxon>
    </lineage>
</organism>
<evidence type="ECO:0000269" key="1">
    <source>
    </source>
</evidence>
<evidence type="ECO:0000305" key="2"/>
<evidence type="ECO:0007829" key="3">
    <source>
        <dbReference type="PDB" id="1V2B"/>
    </source>
</evidence>
<feature type="transit peptide" description="Chloroplast" evidence="1">
    <location>
        <begin position="1"/>
        <end position="79"/>
    </location>
</feature>
<feature type="chain" id="PRO_0000029584" description="Oxygen-evolving enhancer protein 2-2, chloroplastic">
    <location>
        <begin position="80"/>
        <end position="265"/>
    </location>
</feature>
<feature type="strand" evidence="3">
    <location>
        <begin position="97"/>
        <end position="101"/>
    </location>
</feature>
<feature type="strand" evidence="3">
    <location>
        <begin position="103"/>
        <end position="110"/>
    </location>
</feature>
<feature type="strand" evidence="3">
    <location>
        <begin position="124"/>
        <end position="130"/>
    </location>
</feature>
<feature type="strand" evidence="3">
    <location>
        <begin position="133"/>
        <end position="144"/>
    </location>
</feature>
<feature type="helix" evidence="3">
    <location>
        <begin position="150"/>
        <end position="153"/>
    </location>
</feature>
<feature type="helix" evidence="3">
    <location>
        <begin position="156"/>
        <end position="162"/>
    </location>
</feature>
<feature type="helix" evidence="3">
    <location>
        <begin position="163"/>
        <end position="166"/>
    </location>
</feature>
<feature type="strand" evidence="3">
    <location>
        <begin position="189"/>
        <end position="200"/>
    </location>
</feature>
<feature type="strand" evidence="3">
    <location>
        <begin position="203"/>
        <end position="213"/>
    </location>
</feature>
<feature type="strand" evidence="3">
    <location>
        <begin position="222"/>
        <end position="231"/>
    </location>
</feature>
<feature type="strand" evidence="3">
    <location>
        <begin position="234"/>
        <end position="243"/>
    </location>
</feature>
<feature type="helix" evidence="3">
    <location>
        <begin position="244"/>
        <end position="246"/>
    </location>
</feature>
<feature type="turn" evidence="3">
    <location>
        <begin position="249"/>
        <end position="252"/>
    </location>
</feature>
<feature type="helix" evidence="3">
    <location>
        <begin position="253"/>
        <end position="260"/>
    </location>
</feature>
<comment type="function">
    <text>May be involved in the regulation of photosystem II.</text>
</comment>
<comment type="subcellular location">
    <subcellularLocation>
        <location>Plastid</location>
        <location>Chloroplast thylakoid membrane</location>
    </subcellularLocation>
    <text>Associated with the photosystem II complex.</text>
</comment>
<comment type="induction">
    <text>By light.</text>
</comment>
<comment type="similarity">
    <text evidence="2">Belongs to the PsbP family.</text>
</comment>
<keyword id="KW-0002">3D-structure</keyword>
<keyword id="KW-0150">Chloroplast</keyword>
<keyword id="KW-0903">Direct protein sequencing</keyword>
<keyword id="KW-0472">Membrane</keyword>
<keyword id="KW-0602">Photosynthesis</keyword>
<keyword id="KW-0604">Photosystem II</keyword>
<keyword id="KW-0934">Plastid</keyword>
<keyword id="KW-1185">Reference proteome</keyword>
<keyword id="KW-0793">Thylakoid</keyword>
<keyword id="KW-0809">Transit peptide</keyword>
<reference key="1">
    <citation type="journal article" date="1991" name="Plant Mol. Biol.">
        <title>Nucleotide sequence of a cDNA clone encoding 23 kDa polypeptide of the oxygen-evolving complex of photosystem II in tobacco, Nicotiana tabacum L.</title>
        <authorList>
            <person name="Hua S."/>
            <person name="Dube S.K."/>
            <person name="Barnett N.M."/>
            <person name="Kung S."/>
        </authorList>
    </citation>
    <scope>NUCLEOTIDE SEQUENCE [MRNA]</scope>
    <source>
        <strain>cv. SR1</strain>
        <tissue>Leaf</tissue>
    </source>
</reference>
<reference key="2">
    <citation type="journal article" date="1991" name="Plant Mol. Biol.">
        <title>A protein in the oxygen-evolving complex in the chloroplast is associated with symptom expression on tobacco leaves infected with cucumber mosaic virus strain Y.</title>
        <authorList>
            <person name="Takahashi H."/>
            <person name="Ehara Y."/>
            <person name="Hirano H."/>
        </authorList>
    </citation>
    <scope>PROTEIN SEQUENCE OF 80-91</scope>
    <source>
        <strain>cv. KY57</strain>
    </source>
</reference>